<proteinExistence type="inferred from homology"/>
<dbReference type="EC" id="2.1.1.-" evidence="1"/>
<dbReference type="EC" id="2.1.1.35" evidence="1"/>
<dbReference type="EMBL" id="CP001657">
    <property type="protein sequence ID" value="ACT11251.1"/>
    <property type="molecule type" value="Genomic_DNA"/>
</dbReference>
<dbReference type="RefSeq" id="WP_012772924.1">
    <property type="nucleotide sequence ID" value="NC_012917.1"/>
</dbReference>
<dbReference type="SMR" id="C6DHQ1"/>
<dbReference type="STRING" id="561230.PC1_0191"/>
<dbReference type="KEGG" id="pct:PC1_0191"/>
<dbReference type="eggNOG" id="COG2265">
    <property type="taxonomic scope" value="Bacteria"/>
</dbReference>
<dbReference type="HOGENOM" id="CLU_043022_0_0_6"/>
<dbReference type="OrthoDB" id="9804590at2"/>
<dbReference type="Proteomes" id="UP000002736">
    <property type="component" value="Chromosome"/>
</dbReference>
<dbReference type="GO" id="GO:0005829">
    <property type="term" value="C:cytosol"/>
    <property type="evidence" value="ECO:0007669"/>
    <property type="project" value="TreeGrafter"/>
</dbReference>
<dbReference type="GO" id="GO:0019843">
    <property type="term" value="F:rRNA binding"/>
    <property type="evidence" value="ECO:0007669"/>
    <property type="project" value="TreeGrafter"/>
</dbReference>
<dbReference type="GO" id="GO:0030697">
    <property type="term" value="F:tRNA (uracil(54)-C5)-methyltransferase activity, S-adenosyl methionine-dependent"/>
    <property type="evidence" value="ECO:0007669"/>
    <property type="project" value="UniProtKB-UniRule"/>
</dbReference>
<dbReference type="GO" id="GO:0000049">
    <property type="term" value="F:tRNA binding"/>
    <property type="evidence" value="ECO:0007669"/>
    <property type="project" value="TreeGrafter"/>
</dbReference>
<dbReference type="GO" id="GO:0030488">
    <property type="term" value="P:tRNA methylation"/>
    <property type="evidence" value="ECO:0007669"/>
    <property type="project" value="UniProtKB-UniRule"/>
</dbReference>
<dbReference type="CDD" id="cd02440">
    <property type="entry name" value="AdoMet_MTases"/>
    <property type="match status" value="1"/>
</dbReference>
<dbReference type="FunFam" id="2.40.50.1070:FF:000001">
    <property type="entry name" value="tRNA/tmRNA (uracil-C(5))-methyltransferase"/>
    <property type="match status" value="1"/>
</dbReference>
<dbReference type="FunFam" id="3.40.50.150:FF:000012">
    <property type="entry name" value="tRNA/tmRNA (uracil-C(5))-methyltransferase"/>
    <property type="match status" value="1"/>
</dbReference>
<dbReference type="Gene3D" id="2.40.50.1070">
    <property type="match status" value="1"/>
</dbReference>
<dbReference type="Gene3D" id="3.40.50.150">
    <property type="entry name" value="Vaccinia Virus protein VP39"/>
    <property type="match status" value="1"/>
</dbReference>
<dbReference type="HAMAP" id="MF_01011">
    <property type="entry name" value="RNA_methyltr_TrmA"/>
    <property type="match status" value="1"/>
</dbReference>
<dbReference type="InterPro" id="IPR030390">
    <property type="entry name" value="MeTrfase_TrmA_AS"/>
</dbReference>
<dbReference type="InterPro" id="IPR030391">
    <property type="entry name" value="MeTrfase_TrmA_CS"/>
</dbReference>
<dbReference type="InterPro" id="IPR029063">
    <property type="entry name" value="SAM-dependent_MTases_sf"/>
</dbReference>
<dbReference type="InterPro" id="IPR011869">
    <property type="entry name" value="TrmA_MeTrfase"/>
</dbReference>
<dbReference type="InterPro" id="IPR010280">
    <property type="entry name" value="U5_MeTrfase_fam"/>
</dbReference>
<dbReference type="NCBIfam" id="TIGR02143">
    <property type="entry name" value="trmA_only"/>
    <property type="match status" value="1"/>
</dbReference>
<dbReference type="PANTHER" id="PTHR47790">
    <property type="entry name" value="TRNA/TMRNA (URACIL-C(5))-METHYLTRANSFERASE"/>
    <property type="match status" value="1"/>
</dbReference>
<dbReference type="PANTHER" id="PTHR47790:SF2">
    <property type="entry name" value="TRNA_TMRNA (URACIL-C(5))-METHYLTRANSFERASE"/>
    <property type="match status" value="1"/>
</dbReference>
<dbReference type="Pfam" id="PF05958">
    <property type="entry name" value="tRNA_U5-meth_tr"/>
    <property type="match status" value="1"/>
</dbReference>
<dbReference type="SUPFAM" id="SSF53335">
    <property type="entry name" value="S-adenosyl-L-methionine-dependent methyltransferases"/>
    <property type="match status" value="1"/>
</dbReference>
<dbReference type="PROSITE" id="PS51687">
    <property type="entry name" value="SAM_MT_RNA_M5U"/>
    <property type="match status" value="1"/>
</dbReference>
<dbReference type="PROSITE" id="PS01230">
    <property type="entry name" value="TRMA_1"/>
    <property type="match status" value="1"/>
</dbReference>
<dbReference type="PROSITE" id="PS01231">
    <property type="entry name" value="TRMA_2"/>
    <property type="match status" value="1"/>
</dbReference>
<evidence type="ECO:0000255" key="1">
    <source>
        <dbReference type="HAMAP-Rule" id="MF_01011"/>
    </source>
</evidence>
<organism>
    <name type="scientific">Pectobacterium carotovorum subsp. carotovorum (strain PC1)</name>
    <dbReference type="NCBI Taxonomy" id="561230"/>
    <lineage>
        <taxon>Bacteria</taxon>
        <taxon>Pseudomonadati</taxon>
        <taxon>Pseudomonadota</taxon>
        <taxon>Gammaproteobacteria</taxon>
        <taxon>Enterobacterales</taxon>
        <taxon>Pectobacteriaceae</taxon>
        <taxon>Pectobacterium</taxon>
    </lineage>
</organism>
<protein>
    <recommendedName>
        <fullName evidence="1">tRNA/tmRNA (uracil-C(5))-methyltransferase</fullName>
        <ecNumber evidence="1">2.1.1.-</ecNumber>
        <ecNumber evidence="1">2.1.1.35</ecNumber>
    </recommendedName>
    <alternativeName>
        <fullName evidence="1">tRNA (uracil(54)-C(5))-methyltransferase</fullName>
    </alternativeName>
    <alternativeName>
        <fullName evidence="1">tRNA(m5U54)-methyltransferase</fullName>
        <shortName evidence="1">RUMT</shortName>
    </alternativeName>
    <alternativeName>
        <fullName evidence="1">tmRNA (uracil(341)-C(5))-methyltransferase</fullName>
    </alternativeName>
</protein>
<keyword id="KW-0489">Methyltransferase</keyword>
<keyword id="KW-0949">S-adenosyl-L-methionine</keyword>
<keyword id="KW-0808">Transferase</keyword>
<keyword id="KW-0819">tRNA processing</keyword>
<sequence>MTPEILPIEQYDDQLAEKTERLRGMMAPFNAPEPVVFRSPVSHYRMRAEFRIWHEGDELYHIMFDQQTKQRIRVDRFPAASELINRLMPELLAAIQPDSVLRRKLFQIDYLSTLSGEVIVSLLYHRALDEEWQEHARALRDSLTAQGFRLQLIGRATKTKICLDRDYVDECLPVAGRDMIYRQVENSFTQPNAAINIQMLEWALDATAGSTGDLLELYCGNGNFSLALARNFERVLATEIAKPSVAAAQYNIAANQIENVQIIRMAAEEFTQAMQGVRQFNRLQGIDLTSYQCETIFVDPPRSGLDDETVKLVQAYPRILYISCNPETLSHNLQTLSETHDIRRLALFDQFPYTHHMECGVLLEKRQ</sequence>
<reference key="1">
    <citation type="submission" date="2009-07" db="EMBL/GenBank/DDBJ databases">
        <title>Complete sequence of Pectobacterium carotovorum subsp. carotovorum PC1.</title>
        <authorList>
            <consortium name="US DOE Joint Genome Institute"/>
            <person name="Lucas S."/>
            <person name="Copeland A."/>
            <person name="Lapidus A."/>
            <person name="Glavina del Rio T."/>
            <person name="Tice H."/>
            <person name="Bruce D."/>
            <person name="Goodwin L."/>
            <person name="Pitluck S."/>
            <person name="Munk A.C."/>
            <person name="Brettin T."/>
            <person name="Detter J.C."/>
            <person name="Han C."/>
            <person name="Tapia R."/>
            <person name="Larimer F."/>
            <person name="Land M."/>
            <person name="Hauser L."/>
            <person name="Kyrpides N."/>
            <person name="Mikhailova N."/>
            <person name="Balakrishnan V."/>
            <person name="Glasner J."/>
            <person name="Perna N.T."/>
        </authorList>
    </citation>
    <scope>NUCLEOTIDE SEQUENCE [LARGE SCALE GENOMIC DNA]</scope>
    <source>
        <strain>PC1</strain>
    </source>
</reference>
<comment type="function">
    <text evidence="1">Dual-specificity methyltransferase that catalyzes the formation of 5-methyluridine at position 54 (m5U54) in all tRNAs, and that of position 341 (m5U341) in tmRNA (transfer-mRNA).</text>
</comment>
<comment type="catalytic activity">
    <reaction evidence="1">
        <text>uridine(54) in tRNA + S-adenosyl-L-methionine = 5-methyluridine(54) in tRNA + S-adenosyl-L-homocysteine + H(+)</text>
        <dbReference type="Rhea" id="RHEA:42712"/>
        <dbReference type="Rhea" id="RHEA-COMP:10167"/>
        <dbReference type="Rhea" id="RHEA-COMP:10193"/>
        <dbReference type="ChEBI" id="CHEBI:15378"/>
        <dbReference type="ChEBI" id="CHEBI:57856"/>
        <dbReference type="ChEBI" id="CHEBI:59789"/>
        <dbReference type="ChEBI" id="CHEBI:65315"/>
        <dbReference type="ChEBI" id="CHEBI:74447"/>
        <dbReference type="EC" id="2.1.1.35"/>
    </reaction>
</comment>
<comment type="catalytic activity">
    <reaction evidence="1">
        <text>uridine(341) in tmRNA + S-adenosyl-L-methionine = 5-methyluridine(341) in tmRNA + S-adenosyl-L-homocysteine + H(+)</text>
        <dbReference type="Rhea" id="RHEA:43612"/>
        <dbReference type="Rhea" id="RHEA-COMP:10630"/>
        <dbReference type="Rhea" id="RHEA-COMP:10631"/>
        <dbReference type="ChEBI" id="CHEBI:15378"/>
        <dbReference type="ChEBI" id="CHEBI:57856"/>
        <dbReference type="ChEBI" id="CHEBI:59789"/>
        <dbReference type="ChEBI" id="CHEBI:65315"/>
        <dbReference type="ChEBI" id="CHEBI:74447"/>
    </reaction>
</comment>
<comment type="similarity">
    <text evidence="1">Belongs to the class I-like SAM-binding methyltransferase superfamily. RNA M5U methyltransferase family. TrmA subfamily.</text>
</comment>
<gene>
    <name evidence="1" type="primary">trmA</name>
    <name type="ordered locus">PC1_0191</name>
</gene>
<accession>C6DHQ1</accession>
<feature type="chain" id="PRO_1000213198" description="tRNA/tmRNA (uracil-C(5))-methyltransferase">
    <location>
        <begin position="1"/>
        <end position="367"/>
    </location>
</feature>
<feature type="active site" description="Nucleophile" evidence="1">
    <location>
        <position position="324"/>
    </location>
</feature>
<feature type="active site" description="Proton acceptor" evidence="1">
    <location>
        <position position="358"/>
    </location>
</feature>
<feature type="binding site" evidence="1">
    <location>
        <position position="190"/>
    </location>
    <ligand>
        <name>S-adenosyl-L-methionine</name>
        <dbReference type="ChEBI" id="CHEBI:59789"/>
    </ligand>
</feature>
<feature type="binding site" evidence="1">
    <location>
        <position position="218"/>
    </location>
    <ligand>
        <name>S-adenosyl-L-methionine</name>
        <dbReference type="ChEBI" id="CHEBI:59789"/>
    </ligand>
</feature>
<feature type="binding site" evidence="1">
    <location>
        <position position="223"/>
    </location>
    <ligand>
        <name>S-adenosyl-L-methionine</name>
        <dbReference type="ChEBI" id="CHEBI:59789"/>
    </ligand>
</feature>
<feature type="binding site" evidence="1">
    <location>
        <position position="239"/>
    </location>
    <ligand>
        <name>S-adenosyl-L-methionine</name>
        <dbReference type="ChEBI" id="CHEBI:59789"/>
    </ligand>
</feature>
<feature type="binding site" evidence="1">
    <location>
        <position position="299"/>
    </location>
    <ligand>
        <name>S-adenosyl-L-methionine</name>
        <dbReference type="ChEBI" id="CHEBI:59789"/>
    </ligand>
</feature>
<name>TRMA_PECCP</name>